<accession>A0A068B409</accession>
<name>CAEG_CONBE</name>
<organism>
    <name type="scientific">Conus betulinus</name>
    <name type="common">Beech cone</name>
    <dbReference type="NCBI Taxonomy" id="89764"/>
    <lineage>
        <taxon>Eukaryota</taxon>
        <taxon>Metazoa</taxon>
        <taxon>Spiralia</taxon>
        <taxon>Lophotrochozoa</taxon>
        <taxon>Mollusca</taxon>
        <taxon>Gastropoda</taxon>
        <taxon>Caenogastropoda</taxon>
        <taxon>Neogastropoda</taxon>
        <taxon>Conoidea</taxon>
        <taxon>Conidae</taxon>
        <taxon>Conus</taxon>
        <taxon>Dendroconus</taxon>
    </lineage>
</organism>
<feature type="propeptide" id="PRO_0000455522" evidence="1">
    <location>
        <begin position="1" status="less than"/>
        <end position="18"/>
    </location>
</feature>
<feature type="peptide" id="PRO_0000455523" description="Conotoxin Bt14.16" evidence="1">
    <location>
        <begin position="19"/>
        <end position="40"/>
    </location>
</feature>
<feature type="disulfide bond" evidence="5">
    <location>
        <begin position="21"/>
        <end position="36"/>
    </location>
</feature>
<feature type="disulfide bond" evidence="5">
    <location>
        <begin position="24"/>
        <end position="29"/>
    </location>
</feature>
<feature type="non-terminal residue" evidence="2">
    <location>
        <position position="1"/>
    </location>
</feature>
<feature type="helix" evidence="6">
    <location>
        <begin position="27"/>
        <end position="30"/>
    </location>
</feature>
<proteinExistence type="evidence at protein level"/>
<evidence type="ECO:0000305" key="1"/>
<evidence type="ECO:0000305" key="2">
    <source ref="1"/>
</evidence>
<evidence type="ECO:0000312" key="3">
    <source>
        <dbReference type="EMBL" id="AIC77093.1"/>
    </source>
</evidence>
<evidence type="ECO:0000312" key="4">
    <source>
        <dbReference type="PDB" id="7EDK"/>
    </source>
</evidence>
<evidence type="ECO:0007744" key="5">
    <source>
        <dbReference type="PDB" id="7EDK"/>
    </source>
</evidence>
<evidence type="ECO:0007829" key="6">
    <source>
        <dbReference type="PDB" id="7EDK"/>
    </source>
</evidence>
<protein>
    <recommendedName>
        <fullName evidence="3">Conotoxin Bt14.16</fullName>
    </recommendedName>
</protein>
<sequence>SDGRDAAVIYTESDVIARGDCKPCMHPDCRFNPGRCRPRE</sequence>
<keyword id="KW-0002">3D-structure</keyword>
<keyword id="KW-1015">Disulfide bond</keyword>
<keyword id="KW-0872">Ion channel impairing toxin</keyword>
<keyword id="KW-0528">Neurotoxin</keyword>
<keyword id="KW-0964">Secreted</keyword>
<keyword id="KW-0800">Toxin</keyword>
<dbReference type="EMBL" id="KF414110">
    <property type="protein sequence ID" value="AIC77093.1"/>
    <property type="molecule type" value="Genomic_DNA"/>
</dbReference>
<dbReference type="PDB" id="7EDK">
    <property type="method" value="NMR"/>
    <property type="chains" value="A=19-37"/>
</dbReference>
<dbReference type="PDBsum" id="7EDK"/>
<dbReference type="SMR" id="A0A068B409"/>
<dbReference type="GO" id="GO:0005576">
    <property type="term" value="C:extracellular region"/>
    <property type="evidence" value="ECO:0007669"/>
    <property type="project" value="UniProtKB-SubCell"/>
</dbReference>
<dbReference type="GO" id="GO:0030550">
    <property type="term" value="F:acetylcholine receptor inhibitor activity"/>
    <property type="evidence" value="ECO:0007669"/>
    <property type="project" value="InterPro"/>
</dbReference>
<dbReference type="GO" id="GO:0099106">
    <property type="term" value="F:ion channel regulator activity"/>
    <property type="evidence" value="ECO:0007669"/>
    <property type="project" value="UniProtKB-KW"/>
</dbReference>
<dbReference type="GO" id="GO:0090729">
    <property type="term" value="F:toxin activity"/>
    <property type="evidence" value="ECO:0007669"/>
    <property type="project" value="UniProtKB-KW"/>
</dbReference>
<dbReference type="InterPro" id="IPR009958">
    <property type="entry name" value="Conotoxin_a-typ"/>
</dbReference>
<dbReference type="Pfam" id="PF07365">
    <property type="entry name" value="Toxin_8"/>
    <property type="match status" value="1"/>
</dbReference>
<reference evidence="3" key="1">
    <citation type="submission" date="2013-07" db="EMBL/GenBank/DDBJ databases">
        <authorList>
            <person name="Zhang L.X."/>
            <person name="Liu Z.G."/>
            <person name="Dai Q.Y."/>
        </authorList>
    </citation>
    <scope>NUCLEOTIDE SEQUENCE [GENOMIC DNA]</scope>
    <source>
        <tissue>Venom gland</tissue>
    </source>
</reference>
<reference evidence="4" key="2">
    <citation type="submission" date="2021-03" db="PDB data bank">
        <title>Structure of peptide Bt14.12.</title>
        <authorList>
            <person name="Zhang H."/>
            <person name="Lin D."/>
            <person name="Guo C."/>
        </authorList>
    </citation>
    <scope>STRUCTURE BY NMR OF 19-37</scope>
    <scope>DISULFIDE BONDS</scope>
</reference>
<comment type="function">
    <text evidence="1">Probable neurotoxin with unknown target. Possibly targets ion channels.</text>
</comment>
<comment type="subcellular location">
    <subcellularLocation>
        <location evidence="1">Secreted</location>
    </subcellularLocation>
</comment>
<comment type="tissue specificity">
    <text evidence="1">Expressed by the venom duct.</text>
</comment>
<comment type="domain">
    <text evidence="1">The cysteine framework is XIV (C-C-C-C).</text>
</comment>
<comment type="similarity">
    <text evidence="1">Belongs to the conotoxin A superfamily.</text>
</comment>